<proteinExistence type="predicted"/>
<accession>Q6GZN8</accession>
<sequence length="605" mass="65374">MYLNALAKVRRGGGGGRPAAGGRPAAGGRPAAGGRPAAGSRAAAGAAGPPKPAKTVRGTVRPRGFGGGRFPPRRFPPAPVDEATREAEKILKSIHAHKVVKLPAQRKKHRGLYKTVRHTMPPDYIPVLGAEVLAGISSPDVMQAVLRIAPTRDNTQAADAMLCATILRAMPYKMVHPFLDMAAEGKDRHANVVLRDTFFPQNARTMDEFKAFMRRRAPDCPSPRTPMVKPPFRIPDAKPGLTPSVRNPRLNIPETAMVSIMTSAPWVAGHSIKGTVLPEGSTGALRGGLASRRWYVDNWVSVRMMGNPPVEYLTFSGKRIPETREMYDAYVRHLQSFGATAVSSSPSPPPNGDAATALANMYVDTGPEYLAALVRALPSGSGAEYEAALAYTVARAVPVFSNGETLHQIRLREGRYRPDGVHGLSDDIAFAEVYSDPDMVAEWKPRLDRIIKARVSEVIAAYRRLATGDLTAKRTPELALSSRIPAPAGLLFPKAFGESAVIRTSRGRRLVIARARRDAPAVLTDLLSVLITPMYPATAEPQRVASDDPTVLGDEPVAAAVEEPRGQAFRRKWGRGVGGKLLDALENYMDAIQQGRLPPYDNDME</sequence>
<protein>
    <recommendedName>
        <fullName>Uncharacterized protein 087L</fullName>
    </recommendedName>
</protein>
<name>087L_FRG3G</name>
<reference key="1">
    <citation type="journal article" date="2004" name="Virology">
        <title>Comparative genomic analyses of frog virus 3, type species of the genus Ranavirus (family Iridoviridae).</title>
        <authorList>
            <person name="Tan W.G."/>
            <person name="Barkman T.J."/>
            <person name="Gregory Chinchar V."/>
            <person name="Essani K."/>
        </authorList>
    </citation>
    <scope>NUCLEOTIDE SEQUENCE [LARGE SCALE GENOMIC DNA]</scope>
</reference>
<organismHost>
    <name type="scientific">Dryophytes versicolor</name>
    <name type="common">chameleon treefrog</name>
    <dbReference type="NCBI Taxonomy" id="30343"/>
</organismHost>
<organismHost>
    <name type="scientific">Lithobates pipiens</name>
    <name type="common">Northern leopard frog</name>
    <name type="synonym">Rana pipiens</name>
    <dbReference type="NCBI Taxonomy" id="8404"/>
</organismHost>
<organismHost>
    <name type="scientific">Lithobates sylvaticus</name>
    <name type="common">Wood frog</name>
    <name type="synonym">Rana sylvatica</name>
    <dbReference type="NCBI Taxonomy" id="45438"/>
</organismHost>
<organismHost>
    <name type="scientific">Notophthalmus viridescens</name>
    <name type="common">Eastern newt</name>
    <name type="synonym">Triturus viridescens</name>
    <dbReference type="NCBI Taxonomy" id="8316"/>
</organismHost>
<keyword id="KW-1185">Reference proteome</keyword>
<feature type="chain" id="PRO_0000410518" description="Uncharacterized protein 087L">
    <location>
        <begin position="1"/>
        <end position="605"/>
    </location>
</feature>
<feature type="region of interest" description="Disordered" evidence="1">
    <location>
        <begin position="10"/>
        <end position="78"/>
    </location>
</feature>
<feature type="region of interest" description="Disordered" evidence="1">
    <location>
        <begin position="216"/>
        <end position="248"/>
    </location>
</feature>
<feature type="compositionally biased region" description="Low complexity" evidence="1">
    <location>
        <begin position="20"/>
        <end position="48"/>
    </location>
</feature>
<feature type="compositionally biased region" description="Pro residues" evidence="1">
    <location>
        <begin position="220"/>
        <end position="233"/>
    </location>
</feature>
<gene>
    <name type="ORF">FV3-087L</name>
</gene>
<evidence type="ECO:0000256" key="1">
    <source>
        <dbReference type="SAM" id="MobiDB-lite"/>
    </source>
</evidence>
<organism>
    <name type="scientific">Frog virus 3 (isolate Goorha)</name>
    <name type="common">FV-3</name>
    <dbReference type="NCBI Taxonomy" id="654924"/>
    <lineage>
        <taxon>Viruses</taxon>
        <taxon>Varidnaviria</taxon>
        <taxon>Bamfordvirae</taxon>
        <taxon>Nucleocytoviricota</taxon>
        <taxon>Megaviricetes</taxon>
        <taxon>Pimascovirales</taxon>
        <taxon>Iridoviridae</taxon>
        <taxon>Alphairidovirinae</taxon>
        <taxon>Ranavirus</taxon>
        <taxon>Frog virus 3</taxon>
    </lineage>
</organism>
<dbReference type="EMBL" id="AY548484">
    <property type="protein sequence ID" value="AAT09747.1"/>
    <property type="molecule type" value="Genomic_DNA"/>
</dbReference>
<dbReference type="RefSeq" id="YP_031666.1">
    <property type="nucleotide sequence ID" value="NC_005946.1"/>
</dbReference>
<dbReference type="KEGG" id="vg:2947806"/>
<dbReference type="Proteomes" id="UP000008770">
    <property type="component" value="Segment"/>
</dbReference>
<dbReference type="InterPro" id="IPR043656">
    <property type="entry name" value="DUF5877"/>
</dbReference>
<dbReference type="Pfam" id="PF19205">
    <property type="entry name" value="DUF5877"/>
    <property type="match status" value="1"/>
</dbReference>